<proteinExistence type="inferred from homology"/>
<comment type="function">
    <text evidence="1">Catalyzes carboxymethyl transfer from carboxy-S-adenosyl-L-methionine (Cx-SAM) to 5-hydroxyuridine (ho5U) to form 5-carboxymethoxyuridine (cmo5U) at position 34 in tRNAs.</text>
</comment>
<comment type="catalytic activity">
    <reaction evidence="1">
        <text>carboxy-S-adenosyl-L-methionine + 5-hydroxyuridine(34) in tRNA = 5-carboxymethoxyuridine(34) in tRNA + S-adenosyl-L-homocysteine + H(+)</text>
        <dbReference type="Rhea" id="RHEA:52848"/>
        <dbReference type="Rhea" id="RHEA-COMP:13381"/>
        <dbReference type="Rhea" id="RHEA-COMP:13383"/>
        <dbReference type="ChEBI" id="CHEBI:15378"/>
        <dbReference type="ChEBI" id="CHEBI:57856"/>
        <dbReference type="ChEBI" id="CHEBI:134278"/>
        <dbReference type="ChEBI" id="CHEBI:136877"/>
        <dbReference type="ChEBI" id="CHEBI:136879"/>
    </reaction>
</comment>
<comment type="subunit">
    <text evidence="1">Homotetramer.</text>
</comment>
<comment type="similarity">
    <text evidence="1">Belongs to the class I-like SAM-binding methyltransferase superfamily. CmoB family.</text>
</comment>
<feature type="chain" id="PRO_0000313945" description="tRNA U34 carboxymethyltransferase">
    <location>
        <begin position="1"/>
        <end position="322"/>
    </location>
</feature>
<feature type="binding site" evidence="1">
    <location>
        <position position="91"/>
    </location>
    <ligand>
        <name>carboxy-S-adenosyl-L-methionine</name>
        <dbReference type="ChEBI" id="CHEBI:134278"/>
    </ligand>
</feature>
<feature type="binding site" evidence="1">
    <location>
        <position position="105"/>
    </location>
    <ligand>
        <name>carboxy-S-adenosyl-L-methionine</name>
        <dbReference type="ChEBI" id="CHEBI:134278"/>
    </ligand>
</feature>
<feature type="binding site" evidence="1">
    <location>
        <position position="110"/>
    </location>
    <ligand>
        <name>carboxy-S-adenosyl-L-methionine</name>
        <dbReference type="ChEBI" id="CHEBI:134278"/>
    </ligand>
</feature>
<feature type="binding site" evidence="1">
    <location>
        <position position="129"/>
    </location>
    <ligand>
        <name>carboxy-S-adenosyl-L-methionine</name>
        <dbReference type="ChEBI" id="CHEBI:134278"/>
    </ligand>
</feature>
<feature type="binding site" evidence="1">
    <location>
        <begin position="179"/>
        <end position="180"/>
    </location>
    <ligand>
        <name>carboxy-S-adenosyl-L-methionine</name>
        <dbReference type="ChEBI" id="CHEBI:134278"/>
    </ligand>
</feature>
<feature type="binding site" evidence="1">
    <location>
        <position position="195"/>
    </location>
    <ligand>
        <name>carboxy-S-adenosyl-L-methionine</name>
        <dbReference type="ChEBI" id="CHEBI:134278"/>
    </ligand>
</feature>
<feature type="binding site" evidence="1">
    <location>
        <position position="199"/>
    </location>
    <ligand>
        <name>carboxy-S-adenosyl-L-methionine</name>
        <dbReference type="ChEBI" id="CHEBI:134278"/>
    </ligand>
</feature>
<feature type="binding site" evidence="1">
    <location>
        <position position="314"/>
    </location>
    <ligand>
        <name>carboxy-S-adenosyl-L-methionine</name>
        <dbReference type="ChEBI" id="CHEBI:134278"/>
    </ligand>
</feature>
<name>CMOB_PSEAB</name>
<evidence type="ECO:0000255" key="1">
    <source>
        <dbReference type="HAMAP-Rule" id="MF_01590"/>
    </source>
</evidence>
<organism>
    <name type="scientific">Pseudomonas aeruginosa (strain UCBPP-PA14)</name>
    <dbReference type="NCBI Taxonomy" id="208963"/>
    <lineage>
        <taxon>Bacteria</taxon>
        <taxon>Pseudomonadati</taxon>
        <taxon>Pseudomonadota</taxon>
        <taxon>Gammaproteobacteria</taxon>
        <taxon>Pseudomonadales</taxon>
        <taxon>Pseudomonadaceae</taxon>
        <taxon>Pseudomonas</taxon>
    </lineage>
</organism>
<gene>
    <name evidence="1" type="primary">cmoB</name>
    <name type="ordered locus">PA14_54270</name>
</gene>
<dbReference type="EC" id="2.5.1.-" evidence="1"/>
<dbReference type="EMBL" id="CP000438">
    <property type="protein sequence ID" value="ABJ09926.1"/>
    <property type="molecule type" value="Genomic_DNA"/>
</dbReference>
<dbReference type="RefSeq" id="WP_003085573.1">
    <property type="nucleotide sequence ID" value="NZ_CP034244.1"/>
</dbReference>
<dbReference type="SMR" id="Q02HS6"/>
<dbReference type="KEGG" id="pau:PA14_54270"/>
<dbReference type="PseudoCAP" id="PA14_54270"/>
<dbReference type="HOGENOM" id="CLU_052665_0_0_6"/>
<dbReference type="BioCyc" id="PAER208963:G1G74-4570-MONOMER"/>
<dbReference type="Proteomes" id="UP000000653">
    <property type="component" value="Chromosome"/>
</dbReference>
<dbReference type="GO" id="GO:0008168">
    <property type="term" value="F:methyltransferase activity"/>
    <property type="evidence" value="ECO:0007669"/>
    <property type="project" value="TreeGrafter"/>
</dbReference>
<dbReference type="GO" id="GO:0016765">
    <property type="term" value="F:transferase activity, transferring alkyl or aryl (other than methyl) groups"/>
    <property type="evidence" value="ECO:0007669"/>
    <property type="project" value="UniProtKB-UniRule"/>
</dbReference>
<dbReference type="GO" id="GO:0002098">
    <property type="term" value="P:tRNA wobble uridine modification"/>
    <property type="evidence" value="ECO:0007669"/>
    <property type="project" value="InterPro"/>
</dbReference>
<dbReference type="CDD" id="cd02440">
    <property type="entry name" value="AdoMet_MTases"/>
    <property type="match status" value="1"/>
</dbReference>
<dbReference type="Gene3D" id="3.40.50.150">
    <property type="entry name" value="Vaccinia Virus protein VP39"/>
    <property type="match status" value="1"/>
</dbReference>
<dbReference type="HAMAP" id="MF_01590">
    <property type="entry name" value="tRNA_carboxymethyltr_CmoB"/>
    <property type="match status" value="1"/>
</dbReference>
<dbReference type="InterPro" id="IPR010017">
    <property type="entry name" value="CmoB"/>
</dbReference>
<dbReference type="InterPro" id="IPR027555">
    <property type="entry name" value="Mo5U34_MeTrfas-like"/>
</dbReference>
<dbReference type="InterPro" id="IPR029063">
    <property type="entry name" value="SAM-dependent_MTases_sf"/>
</dbReference>
<dbReference type="NCBIfam" id="NF011650">
    <property type="entry name" value="PRK15068.1"/>
    <property type="match status" value="1"/>
</dbReference>
<dbReference type="NCBIfam" id="TIGR00452">
    <property type="entry name" value="tRNA 5-methoxyuridine(34)/uridine 5-oxyacetic acid(34) synthase CmoB"/>
    <property type="match status" value="1"/>
</dbReference>
<dbReference type="PANTHER" id="PTHR43464">
    <property type="entry name" value="METHYLTRANSFERASE"/>
    <property type="match status" value="1"/>
</dbReference>
<dbReference type="PANTHER" id="PTHR43464:SF95">
    <property type="entry name" value="TRNA U34 CARBOXYMETHYLTRANSFERASE"/>
    <property type="match status" value="1"/>
</dbReference>
<dbReference type="Pfam" id="PF08003">
    <property type="entry name" value="Methyltransf_9"/>
    <property type="match status" value="1"/>
</dbReference>
<dbReference type="SUPFAM" id="SSF53335">
    <property type="entry name" value="S-adenosyl-L-methionine-dependent methyltransferases"/>
    <property type="match status" value="1"/>
</dbReference>
<sequence length="322" mass="36488">MIQHLALDALQRHLAGSPLYGWATSLPAQIAARIEEGHGDLARWWSAVQRLPQVPAPKVELAQRFALHSDHDAALQAQVKEALQGLIPWRKGPFDFFGVQVDTEWRSDWKWERVSPHVELRGKRVLDVGCGNGYYQWRMLGAGAESVVGVDPNWLFLCQFLAAKRYLPELPAWHLPLALEDLPEKLEGFDTVFSMGVLYHRRSPIDHLLALKDCLKRGGELVLETLVVEGDASTVLVPEDRYAQMRNVWFLPSVAALELWLRRAGFADARCVDVSLTSVEEQRSTEWMRFQSLPEFLDPQDRSRTVEGLPAPMRATLVARKP</sequence>
<protein>
    <recommendedName>
        <fullName evidence="1">tRNA U34 carboxymethyltransferase</fullName>
        <ecNumber evidence="1">2.5.1.-</ecNumber>
    </recommendedName>
</protein>
<keyword id="KW-0808">Transferase</keyword>
<keyword id="KW-0819">tRNA processing</keyword>
<reference key="1">
    <citation type="journal article" date="2006" name="Genome Biol.">
        <title>Genomic analysis reveals that Pseudomonas aeruginosa virulence is combinatorial.</title>
        <authorList>
            <person name="Lee D.G."/>
            <person name="Urbach J.M."/>
            <person name="Wu G."/>
            <person name="Liberati N.T."/>
            <person name="Feinbaum R.L."/>
            <person name="Miyata S."/>
            <person name="Diggins L.T."/>
            <person name="He J."/>
            <person name="Saucier M."/>
            <person name="Deziel E."/>
            <person name="Friedman L."/>
            <person name="Li L."/>
            <person name="Grills G."/>
            <person name="Montgomery K."/>
            <person name="Kucherlapati R."/>
            <person name="Rahme L.G."/>
            <person name="Ausubel F.M."/>
        </authorList>
    </citation>
    <scope>NUCLEOTIDE SEQUENCE [LARGE SCALE GENOMIC DNA]</scope>
    <source>
        <strain>UCBPP-PA14</strain>
    </source>
</reference>
<accession>Q02HS6</accession>